<keyword id="KW-1185">Reference proteome</keyword>
<protein>
    <recommendedName>
        <fullName>Putative uncharacterized protein C8orf44</fullName>
    </recommendedName>
</protein>
<gene>
    <name type="primary">C8orf44</name>
</gene>
<evidence type="ECO:0000269" key="1">
    <source>
    </source>
</evidence>
<sequence>MRKNESYLNQPAPPIPIPTLSLMGGCREHFENHWKGRARWLMPVIPALWEAKAGRSPEVRSSKPAWPTWRNPIFTKNTKISQVLELFLNYQSLICALEKQKRQKGSLAIFCWSFQGGCVSKRPDVPSLKSQKPKRKRITGRKRLSKGFWSLLFSNLGRF</sequence>
<organism>
    <name type="scientific">Homo sapiens</name>
    <name type="common">Human</name>
    <dbReference type="NCBI Taxonomy" id="9606"/>
    <lineage>
        <taxon>Eukaryota</taxon>
        <taxon>Metazoa</taxon>
        <taxon>Chordata</taxon>
        <taxon>Craniata</taxon>
        <taxon>Vertebrata</taxon>
        <taxon>Euteleostomi</taxon>
        <taxon>Mammalia</taxon>
        <taxon>Eutheria</taxon>
        <taxon>Euarchontoglires</taxon>
        <taxon>Primates</taxon>
        <taxon>Haplorrhini</taxon>
        <taxon>Catarrhini</taxon>
        <taxon>Hominidae</taxon>
        <taxon>Homo</taxon>
    </lineage>
</organism>
<feature type="chain" id="PRO_0000279417" description="Putative uncharacterized protein C8orf44">
    <location>
        <begin position="1"/>
        <end position="159"/>
    </location>
</feature>
<feature type="sequence variant" id="VAR_030888" description="In dbSNP:rs1909534.">
    <original>Q</original>
    <variation>R</variation>
    <location>
        <position position="131"/>
    </location>
</feature>
<feature type="sequence variant" id="VAR_030889" description="In dbSNP:rs1057463." evidence="1">
    <original>F</original>
    <variation>S</variation>
    <location>
        <position position="148"/>
    </location>
</feature>
<reference key="1">
    <citation type="journal article" date="2004" name="Nat. Genet.">
        <title>Complete sequencing and characterization of 21,243 full-length human cDNAs.</title>
        <authorList>
            <person name="Ota T."/>
            <person name="Suzuki Y."/>
            <person name="Nishikawa T."/>
            <person name="Otsuki T."/>
            <person name="Sugiyama T."/>
            <person name="Irie R."/>
            <person name="Wakamatsu A."/>
            <person name="Hayashi K."/>
            <person name="Sato H."/>
            <person name="Nagai K."/>
            <person name="Kimura K."/>
            <person name="Makita H."/>
            <person name="Sekine M."/>
            <person name="Obayashi M."/>
            <person name="Nishi T."/>
            <person name="Shibahara T."/>
            <person name="Tanaka T."/>
            <person name="Ishii S."/>
            <person name="Yamamoto J."/>
            <person name="Saito K."/>
            <person name="Kawai Y."/>
            <person name="Isono Y."/>
            <person name="Nakamura Y."/>
            <person name="Nagahari K."/>
            <person name="Murakami K."/>
            <person name="Yasuda T."/>
            <person name="Iwayanagi T."/>
            <person name="Wagatsuma M."/>
            <person name="Shiratori A."/>
            <person name="Sudo H."/>
            <person name="Hosoiri T."/>
            <person name="Kaku Y."/>
            <person name="Kodaira H."/>
            <person name="Kondo H."/>
            <person name="Sugawara M."/>
            <person name="Takahashi M."/>
            <person name="Kanda K."/>
            <person name="Yokoi T."/>
            <person name="Furuya T."/>
            <person name="Kikkawa E."/>
            <person name="Omura Y."/>
            <person name="Abe K."/>
            <person name="Kamihara K."/>
            <person name="Katsuta N."/>
            <person name="Sato K."/>
            <person name="Tanikawa M."/>
            <person name="Yamazaki M."/>
            <person name="Ninomiya K."/>
            <person name="Ishibashi T."/>
            <person name="Yamashita H."/>
            <person name="Murakawa K."/>
            <person name="Fujimori K."/>
            <person name="Tanai H."/>
            <person name="Kimata M."/>
            <person name="Watanabe M."/>
            <person name="Hiraoka S."/>
            <person name="Chiba Y."/>
            <person name="Ishida S."/>
            <person name="Ono Y."/>
            <person name="Takiguchi S."/>
            <person name="Watanabe S."/>
            <person name="Yosida M."/>
            <person name="Hotuta T."/>
            <person name="Kusano J."/>
            <person name="Kanehori K."/>
            <person name="Takahashi-Fujii A."/>
            <person name="Hara H."/>
            <person name="Tanase T.-O."/>
            <person name="Nomura Y."/>
            <person name="Togiya S."/>
            <person name="Komai F."/>
            <person name="Hara R."/>
            <person name="Takeuchi K."/>
            <person name="Arita M."/>
            <person name="Imose N."/>
            <person name="Musashino K."/>
            <person name="Yuuki H."/>
            <person name="Oshima A."/>
            <person name="Sasaki N."/>
            <person name="Aotsuka S."/>
            <person name="Yoshikawa Y."/>
            <person name="Matsunawa H."/>
            <person name="Ichihara T."/>
            <person name="Shiohata N."/>
            <person name="Sano S."/>
            <person name="Moriya S."/>
            <person name="Momiyama H."/>
            <person name="Satoh N."/>
            <person name="Takami S."/>
            <person name="Terashima Y."/>
            <person name="Suzuki O."/>
            <person name="Nakagawa S."/>
            <person name="Senoh A."/>
            <person name="Mizoguchi H."/>
            <person name="Goto Y."/>
            <person name="Shimizu F."/>
            <person name="Wakebe H."/>
            <person name="Hishigaki H."/>
            <person name="Watanabe T."/>
            <person name="Sugiyama A."/>
            <person name="Takemoto M."/>
            <person name="Kawakami B."/>
            <person name="Yamazaki M."/>
            <person name="Watanabe K."/>
            <person name="Kumagai A."/>
            <person name="Itakura S."/>
            <person name="Fukuzumi Y."/>
            <person name="Fujimori Y."/>
            <person name="Komiyama M."/>
            <person name="Tashiro H."/>
            <person name="Tanigami A."/>
            <person name="Fujiwara T."/>
            <person name="Ono T."/>
            <person name="Yamada K."/>
            <person name="Fujii Y."/>
            <person name="Ozaki K."/>
            <person name="Hirao M."/>
            <person name="Ohmori Y."/>
            <person name="Kawabata A."/>
            <person name="Hikiji T."/>
            <person name="Kobatake N."/>
            <person name="Inagaki H."/>
            <person name="Ikema Y."/>
            <person name="Okamoto S."/>
            <person name="Okitani R."/>
            <person name="Kawakami T."/>
            <person name="Noguchi S."/>
            <person name="Itoh T."/>
            <person name="Shigeta K."/>
            <person name="Senba T."/>
            <person name="Matsumura K."/>
            <person name="Nakajima Y."/>
            <person name="Mizuno T."/>
            <person name="Morinaga M."/>
            <person name="Sasaki M."/>
            <person name="Togashi T."/>
            <person name="Oyama M."/>
            <person name="Hata H."/>
            <person name="Watanabe M."/>
            <person name="Komatsu T."/>
            <person name="Mizushima-Sugano J."/>
            <person name="Satoh T."/>
            <person name="Shirai Y."/>
            <person name="Takahashi Y."/>
            <person name="Nakagawa K."/>
            <person name="Okumura K."/>
            <person name="Nagase T."/>
            <person name="Nomura N."/>
            <person name="Kikuchi H."/>
            <person name="Masuho Y."/>
            <person name="Yamashita R."/>
            <person name="Nakai K."/>
            <person name="Yada T."/>
            <person name="Nakamura Y."/>
            <person name="Ohara O."/>
            <person name="Isogai T."/>
            <person name="Sugano S."/>
        </authorList>
    </citation>
    <scope>NUCLEOTIDE SEQUENCE [LARGE SCALE MRNA]</scope>
    <source>
        <tissue>Placenta</tissue>
    </source>
</reference>
<reference key="2">
    <citation type="journal article" date="2006" name="Nature">
        <title>DNA sequence and analysis of human chromosome 8.</title>
        <authorList>
            <person name="Nusbaum C."/>
            <person name="Mikkelsen T.S."/>
            <person name="Zody M.C."/>
            <person name="Asakawa S."/>
            <person name="Taudien S."/>
            <person name="Garber M."/>
            <person name="Kodira C.D."/>
            <person name="Schueler M.G."/>
            <person name="Shimizu A."/>
            <person name="Whittaker C.A."/>
            <person name="Chang J.L."/>
            <person name="Cuomo C.A."/>
            <person name="Dewar K."/>
            <person name="FitzGerald M.G."/>
            <person name="Yang X."/>
            <person name="Allen N.R."/>
            <person name="Anderson S."/>
            <person name="Asakawa T."/>
            <person name="Blechschmidt K."/>
            <person name="Bloom T."/>
            <person name="Borowsky M.L."/>
            <person name="Butler J."/>
            <person name="Cook A."/>
            <person name="Corum B."/>
            <person name="DeArellano K."/>
            <person name="DeCaprio D."/>
            <person name="Dooley K.T."/>
            <person name="Dorris L. III"/>
            <person name="Engels R."/>
            <person name="Gloeckner G."/>
            <person name="Hafez N."/>
            <person name="Hagopian D.S."/>
            <person name="Hall J.L."/>
            <person name="Ishikawa S.K."/>
            <person name="Jaffe D.B."/>
            <person name="Kamat A."/>
            <person name="Kudoh J."/>
            <person name="Lehmann R."/>
            <person name="Lokitsang T."/>
            <person name="Macdonald P."/>
            <person name="Major J.E."/>
            <person name="Matthews C.D."/>
            <person name="Mauceli E."/>
            <person name="Menzel U."/>
            <person name="Mihalev A.H."/>
            <person name="Minoshima S."/>
            <person name="Murayama Y."/>
            <person name="Naylor J.W."/>
            <person name="Nicol R."/>
            <person name="Nguyen C."/>
            <person name="O'Leary S.B."/>
            <person name="O'Neill K."/>
            <person name="Parker S.C.J."/>
            <person name="Polley A."/>
            <person name="Raymond C.K."/>
            <person name="Reichwald K."/>
            <person name="Rodriguez J."/>
            <person name="Sasaki T."/>
            <person name="Schilhabel M."/>
            <person name="Siddiqui R."/>
            <person name="Smith C.L."/>
            <person name="Sneddon T.P."/>
            <person name="Talamas J.A."/>
            <person name="Tenzin P."/>
            <person name="Topham K."/>
            <person name="Venkataraman V."/>
            <person name="Wen G."/>
            <person name="Yamazaki S."/>
            <person name="Young S.K."/>
            <person name="Zeng Q."/>
            <person name="Zimmer A.R."/>
            <person name="Rosenthal A."/>
            <person name="Birren B.W."/>
            <person name="Platzer M."/>
            <person name="Shimizu N."/>
            <person name="Lander E.S."/>
        </authorList>
    </citation>
    <scope>NUCLEOTIDE SEQUENCE [LARGE SCALE GENOMIC DNA]</scope>
</reference>
<reference key="3">
    <citation type="journal article" date="2004" name="Genome Res.">
        <title>The status, quality, and expansion of the NIH full-length cDNA project: the Mammalian Gene Collection (MGC).</title>
        <authorList>
            <consortium name="The MGC Project Team"/>
        </authorList>
    </citation>
    <scope>NUCLEOTIDE SEQUENCE [LARGE SCALE MRNA]</scope>
    <scope>VARIANT SER-148</scope>
    <source>
        <tissue>Pancreas</tissue>
    </source>
</reference>
<dbReference type="EMBL" id="AK002129">
    <property type="protein sequence ID" value="BAA92096.1"/>
    <property type="molecule type" value="mRNA"/>
</dbReference>
<dbReference type="EMBL" id="AC090154">
    <property type="status" value="NOT_ANNOTATED_CDS"/>
    <property type="molecule type" value="Genomic_DNA"/>
</dbReference>
<dbReference type="EMBL" id="BC014448">
    <property type="protein sequence ID" value="AAH14448.1"/>
    <property type="molecule type" value="mRNA"/>
</dbReference>
<dbReference type="RefSeq" id="NP_062553.1">
    <property type="nucleotide sequence ID" value="NM_019607.2"/>
</dbReference>
<dbReference type="BioGRID" id="121124">
    <property type="interactions" value="3"/>
</dbReference>
<dbReference type="IntAct" id="Q96CB5">
    <property type="interactions" value="2"/>
</dbReference>
<dbReference type="iPTMnet" id="Q96CB5"/>
<dbReference type="PhosphoSitePlus" id="Q96CB5"/>
<dbReference type="BioMuta" id="C8orf44"/>
<dbReference type="PaxDb" id="9606-ENSP00000428002"/>
<dbReference type="UCSC" id="uc003xwo.3">
    <property type="organism name" value="human"/>
</dbReference>
<dbReference type="AGR" id="HGNC:25646"/>
<dbReference type="GeneCards" id="C8orf44"/>
<dbReference type="HGNC" id="HGNC:25646">
    <property type="gene designation" value="C8orf44"/>
</dbReference>
<dbReference type="neXtProt" id="NX_Q96CB5"/>
<dbReference type="PharmGKB" id="PA142672363"/>
<dbReference type="eggNOG" id="ENOG502TDVC">
    <property type="taxonomic scope" value="Eukaryota"/>
</dbReference>
<dbReference type="HOGENOM" id="CLU_142005_0_0_1"/>
<dbReference type="InParanoid" id="Q96CB5"/>
<dbReference type="PAN-GO" id="Q96CB5">
    <property type="GO annotations" value="0 GO annotations based on evolutionary models"/>
</dbReference>
<dbReference type="PhylomeDB" id="Q96CB5"/>
<dbReference type="TreeFam" id="TF340891"/>
<dbReference type="PathwayCommons" id="Q96CB5"/>
<dbReference type="SignaLink" id="Q96CB5"/>
<dbReference type="BioGRID-ORCS" id="56260">
    <property type="hits" value="54 hits in 1115 CRISPR screens"/>
</dbReference>
<dbReference type="GenomeRNAi" id="56260"/>
<dbReference type="Pharos" id="Q96CB5">
    <property type="development level" value="Tdark"/>
</dbReference>
<dbReference type="PRO" id="PR:Q96CB5"/>
<dbReference type="Proteomes" id="UP000005640">
    <property type="component" value="Chromosome 8"/>
</dbReference>
<dbReference type="RNAct" id="Q96CB5">
    <property type="molecule type" value="protein"/>
</dbReference>
<accession>Q96CB5</accession>
<accession>Q9NUM6</accession>
<name>CH044_HUMAN</name>
<proteinExistence type="evidence at transcript level"/>